<sequence>MLNQHTSSVPDDEHLQMAHQNSSSEVRNEAAVPDQLLTPLQPYTILLKDGETIATMYPIPAYPDLLPLGLLNFLLDEFNMEVEKGDSFPYYETLSLEEFKNVWFHNDGHVCIMVLGEIPELDYSMDTEADTNDNFGTEIETTKHTTQYKKRKERRNLNLSMQWEKQCLGIFDLKPAYPGRSAHVVTGTFLVNAGIRGKGIGKTLMETFIEWSKKLGFTSSFFPLIYGTNVGIRRILEGLNFRRIGKLPEAGILKGFDVPVDSFMYGKEFTHITKSIDLLRDPQKSIEIGKYERLKHFLETGKYPLHCDRNEKARLRVLSKTHSVLNGKLMTKGKEIIYDTDQQIQIALEIHLMEHLGINKVTSKIGEKYHWRGIKSTVSEVISRCQKCKMRYKDGTGVIIEQKRAVKQAHMLPTQHIETINNPRKSKKHDNALLGQAINFPQNIISSTLNDVEGEPTPPDTNIVQPTFQNATNSPATTAEANEANKRSEFLSSIQSTPLLDDEQSMNSFNRFVEEENSRKRRKYLDVASNGIVPHLTNNESQDHANPVNRDERDMNHSVPDLDRNDHTIMNDAMLSLEDNVMAALEMVQKEQQQKINHRGEDVTGQQIDLNNSEGNENSVTKIVNNESNTFTEHNSNIYY</sequence>
<reference key="1">
    <citation type="journal article" date="1994" name="Genetics">
        <title>The SPT10 and SPT21 genes of Saccharomyces cerevisiae.</title>
        <authorList>
            <person name="Natsoulis G."/>
            <person name="Winston F."/>
            <person name="Boeke J.D."/>
        </authorList>
    </citation>
    <scope>NUCLEOTIDE SEQUENCE [GENOMIC DNA]</scope>
    <scope>MUTAGENESIS</scope>
</reference>
<reference key="2">
    <citation type="journal article" date="1996" name="Yeast">
        <title>Sequencing analysis of a 40.2 kb fragment of yeast chromosome X reveals 19 open reading frames including URA2 (5' end), TRK1, PBS2, SPT10, GCD14, RPE1, PHO86, NCA3, ASF1, CCT7, GZF3, two tRNA genes, three remnant delta elements and a Ty4 transposon.</title>
        <authorList>
            <person name="Cziepluch C."/>
            <person name="Kordes E."/>
            <person name="Pujol A."/>
            <person name="Jauniaux J.-C."/>
        </authorList>
    </citation>
    <scope>NUCLEOTIDE SEQUENCE [GENOMIC DNA]</scope>
    <source>
        <strain>ATCC 96604 / S288c / FY1679</strain>
    </source>
</reference>
<reference key="3">
    <citation type="journal article" date="1996" name="EMBO J.">
        <title>Complete nucleotide sequence of Saccharomyces cerevisiae chromosome X.</title>
        <authorList>
            <person name="Galibert F."/>
            <person name="Alexandraki D."/>
            <person name="Baur A."/>
            <person name="Boles E."/>
            <person name="Chalwatzis N."/>
            <person name="Chuat J.-C."/>
            <person name="Coster F."/>
            <person name="Cziepluch C."/>
            <person name="de Haan M."/>
            <person name="Domdey H."/>
            <person name="Durand P."/>
            <person name="Entian K.-D."/>
            <person name="Gatius M."/>
            <person name="Goffeau A."/>
            <person name="Grivell L.A."/>
            <person name="Hennemann A."/>
            <person name="Herbert C.J."/>
            <person name="Heumann K."/>
            <person name="Hilger F."/>
            <person name="Hollenberg C.P."/>
            <person name="Huang M.-E."/>
            <person name="Jacq C."/>
            <person name="Jauniaux J.-C."/>
            <person name="Katsoulou C."/>
            <person name="Kirchrath L."/>
            <person name="Kleine K."/>
            <person name="Kordes E."/>
            <person name="Koetter P."/>
            <person name="Liebl S."/>
            <person name="Louis E.J."/>
            <person name="Manus V."/>
            <person name="Mewes H.-W."/>
            <person name="Miosga T."/>
            <person name="Obermaier B."/>
            <person name="Perea J."/>
            <person name="Pohl T.M."/>
            <person name="Portetelle D."/>
            <person name="Pujol A."/>
            <person name="Purnelle B."/>
            <person name="Ramezani Rad M."/>
            <person name="Rasmussen S.W."/>
            <person name="Rose M."/>
            <person name="Rossau R."/>
            <person name="Schaaff-Gerstenschlaeger I."/>
            <person name="Smits P.H.M."/>
            <person name="Scarcez T."/>
            <person name="Soriano N."/>
            <person name="To Van D."/>
            <person name="Tzermia M."/>
            <person name="Van Broekhoven A."/>
            <person name="Vandenbol M."/>
            <person name="Wedler H."/>
            <person name="von Wettstein D."/>
            <person name="Wambutt R."/>
            <person name="Zagulski M."/>
            <person name="Zollner A."/>
            <person name="Karpfinger-Hartl L."/>
        </authorList>
    </citation>
    <scope>NUCLEOTIDE SEQUENCE [LARGE SCALE GENOMIC DNA]</scope>
    <source>
        <strain>ATCC 204508 / S288c</strain>
    </source>
</reference>
<reference key="4">
    <citation type="journal article" date="2014" name="G3 (Bethesda)">
        <title>The reference genome sequence of Saccharomyces cerevisiae: Then and now.</title>
        <authorList>
            <person name="Engel S.R."/>
            <person name="Dietrich F.S."/>
            <person name="Fisk D.G."/>
            <person name="Binkley G."/>
            <person name="Balakrishnan R."/>
            <person name="Costanzo M.C."/>
            <person name="Dwight S.S."/>
            <person name="Hitz B.C."/>
            <person name="Karra K."/>
            <person name="Nash R.S."/>
            <person name="Weng S."/>
            <person name="Wong E.D."/>
            <person name="Lloyd P."/>
            <person name="Skrzypek M.S."/>
            <person name="Miyasato S.R."/>
            <person name="Simison M."/>
            <person name="Cherry J.M."/>
        </authorList>
    </citation>
    <scope>GENOME REANNOTATION</scope>
    <source>
        <strain>ATCC 204508 / S288c</strain>
    </source>
</reference>
<reference key="5">
    <citation type="journal article" date="1993" name="Mol. Gen. Genet.">
        <title>Isolation and characterization of the SUD1 gene, which encodes a global repressor of core promoter activity in Saccharomyces cerevisiae.</title>
        <authorList>
            <person name="Yamashita I."/>
        </authorList>
    </citation>
    <scope>NUCLEOTIDE SEQUENCE [GENOMIC DNA] OF 80-640</scope>
    <source>
        <strain>S288c / GRF88</strain>
    </source>
</reference>
<reference key="6">
    <citation type="journal article" date="2003" name="Nature">
        <title>Global analysis of protein expression in yeast.</title>
        <authorList>
            <person name="Ghaemmaghami S."/>
            <person name="Huh W.-K."/>
            <person name="Bower K."/>
            <person name="Howson R.W."/>
            <person name="Belle A."/>
            <person name="Dephoure N."/>
            <person name="O'Shea E.K."/>
            <person name="Weissman J.S."/>
        </authorList>
    </citation>
    <scope>LEVEL OF PROTEIN EXPRESSION [LARGE SCALE ANALYSIS]</scope>
</reference>
<reference key="7">
    <citation type="journal article" date="2009" name="Mol. Cell">
        <title>Two-color cell array screen reveals interdependent roles for histone chaperones and a chromatin boundary regulator in histone gene repression.</title>
        <authorList>
            <person name="Fillingham J."/>
            <person name="Kainth P."/>
            <person name="Lambert J.P."/>
            <person name="van Bakel H."/>
            <person name="Tsui K."/>
            <person name="Pena-Castillo L."/>
            <person name="Nislow C."/>
            <person name="Figeys D."/>
            <person name="Hughes T.R."/>
            <person name="Greenblatt J."/>
            <person name="Andrews B.J."/>
        </authorList>
    </citation>
    <scope>DISRUPTION PHENOTYPE</scope>
</reference>
<gene>
    <name type="primary">SPT10</name>
    <name type="synonym">CRE1</name>
    <name type="synonym">SUD1</name>
    <name type="ordered locus">YJL127C</name>
    <name type="ORF">J0702</name>
</gene>
<evidence type="ECO:0000255" key="1">
    <source>
        <dbReference type="PROSITE-ProRule" id="PRU00532"/>
    </source>
</evidence>
<evidence type="ECO:0000256" key="2">
    <source>
        <dbReference type="SAM" id="MobiDB-lite"/>
    </source>
</evidence>
<evidence type="ECO:0000269" key="3">
    <source>
    </source>
</evidence>
<evidence type="ECO:0000269" key="4">
    <source>
    </source>
</evidence>
<evidence type="ECO:0000269" key="5">
    <source>
    </source>
</evidence>
<name>SPT10_YEAST</name>
<accession>P35208</accession>
<accession>D6VW59</accession>
<keyword id="KW-1185">Reference proteome</keyword>
<proteinExistence type="evidence at protein level"/>
<dbReference type="EMBL" id="L24435">
    <property type="protein sequence ID" value="AAA35077.1"/>
    <property type="molecule type" value="Genomic_DNA"/>
</dbReference>
<dbReference type="EMBL" id="Z49402">
    <property type="protein sequence ID" value="CAA89422.1"/>
    <property type="molecule type" value="Genomic_DNA"/>
</dbReference>
<dbReference type="EMBL" id="X65186">
    <property type="protein sequence ID" value="CAA46300.1"/>
    <property type="molecule type" value="Genomic_DNA"/>
</dbReference>
<dbReference type="EMBL" id="BK006943">
    <property type="protein sequence ID" value="DAA08675.1"/>
    <property type="molecule type" value="Genomic_DNA"/>
</dbReference>
<dbReference type="PIR" id="S47865">
    <property type="entry name" value="S47865"/>
</dbReference>
<dbReference type="RefSeq" id="NP_012408.1">
    <property type="nucleotide sequence ID" value="NM_001181560.1"/>
</dbReference>
<dbReference type="SMR" id="P35208"/>
<dbReference type="BioGRID" id="33629">
    <property type="interactions" value="397"/>
</dbReference>
<dbReference type="FunCoup" id="P35208">
    <property type="interactions" value="1884"/>
</dbReference>
<dbReference type="IntAct" id="P35208">
    <property type="interactions" value="32"/>
</dbReference>
<dbReference type="MINT" id="P35208"/>
<dbReference type="STRING" id="4932.YJL127C"/>
<dbReference type="GlyGen" id="P35208">
    <property type="glycosylation" value="1 site"/>
</dbReference>
<dbReference type="iPTMnet" id="P35208"/>
<dbReference type="PaxDb" id="4932-YJL127C"/>
<dbReference type="PeptideAtlas" id="P35208"/>
<dbReference type="EnsemblFungi" id="YJL127C_mRNA">
    <property type="protein sequence ID" value="YJL127C"/>
    <property type="gene ID" value="YJL127C"/>
</dbReference>
<dbReference type="GeneID" id="853315"/>
<dbReference type="KEGG" id="sce:YJL127C"/>
<dbReference type="AGR" id="SGD:S000003663"/>
<dbReference type="SGD" id="S000003663">
    <property type="gene designation" value="SPT10"/>
</dbReference>
<dbReference type="VEuPathDB" id="FungiDB:YJL127C"/>
<dbReference type="eggNOG" id="ENOG502QRFX">
    <property type="taxonomic scope" value="Eukaryota"/>
</dbReference>
<dbReference type="HOGENOM" id="CLU_013985_42_4_1"/>
<dbReference type="InParanoid" id="P35208"/>
<dbReference type="OMA" id="ETGKYPL"/>
<dbReference type="OrthoDB" id="10264707at2759"/>
<dbReference type="BioCyc" id="YEAST:G3O-31577-MONOMER"/>
<dbReference type="BioGRID-ORCS" id="853315">
    <property type="hits" value="4 hits in 13 CRISPR screens"/>
</dbReference>
<dbReference type="PRO" id="PR:P35208"/>
<dbReference type="Proteomes" id="UP000002311">
    <property type="component" value="Chromosome X"/>
</dbReference>
<dbReference type="RNAct" id="P35208">
    <property type="molecule type" value="protein"/>
</dbReference>
<dbReference type="GO" id="GO:0000781">
    <property type="term" value="C:chromosome, telomeric region"/>
    <property type="evidence" value="ECO:0007669"/>
    <property type="project" value="GOC"/>
</dbReference>
<dbReference type="GO" id="GO:0005634">
    <property type="term" value="C:nucleus"/>
    <property type="evidence" value="ECO:0007005"/>
    <property type="project" value="SGD"/>
</dbReference>
<dbReference type="GO" id="GO:0016747">
    <property type="term" value="F:acyltransferase activity, transferring groups other than amino-acyl groups"/>
    <property type="evidence" value="ECO:0007669"/>
    <property type="project" value="InterPro"/>
</dbReference>
<dbReference type="GO" id="GO:1990841">
    <property type="term" value="F:promoter-specific chromatin binding"/>
    <property type="evidence" value="ECO:0000314"/>
    <property type="project" value="SGD"/>
</dbReference>
<dbReference type="GO" id="GO:0043565">
    <property type="term" value="F:sequence-specific DNA binding"/>
    <property type="evidence" value="ECO:0000314"/>
    <property type="project" value="SGD"/>
</dbReference>
<dbReference type="GO" id="GO:0006281">
    <property type="term" value="P:DNA repair"/>
    <property type="evidence" value="ECO:0000315"/>
    <property type="project" value="SGD"/>
</dbReference>
<dbReference type="GO" id="GO:0010507">
    <property type="term" value="P:negative regulation of autophagy"/>
    <property type="evidence" value="ECO:0000315"/>
    <property type="project" value="SGD"/>
</dbReference>
<dbReference type="GO" id="GO:0000122">
    <property type="term" value="P:negative regulation of transcription by RNA polymerase II"/>
    <property type="evidence" value="ECO:0000315"/>
    <property type="project" value="SGD"/>
</dbReference>
<dbReference type="GO" id="GO:0000183">
    <property type="term" value="P:rDNA heterochromatin formation"/>
    <property type="evidence" value="ECO:0000315"/>
    <property type="project" value="SGD"/>
</dbReference>
<dbReference type="GO" id="GO:0030466">
    <property type="term" value="P:silent mating-type cassette heterochromatin formation"/>
    <property type="evidence" value="ECO:0000316"/>
    <property type="project" value="SGD"/>
</dbReference>
<dbReference type="GO" id="GO:0031509">
    <property type="term" value="P:subtelomeric heterochromatin formation"/>
    <property type="evidence" value="ECO:0000315"/>
    <property type="project" value="SGD"/>
</dbReference>
<dbReference type="CDD" id="cd04301">
    <property type="entry name" value="NAT_SF"/>
    <property type="match status" value="1"/>
</dbReference>
<dbReference type="FunFam" id="1.10.340.70:FF:000007">
    <property type="entry name" value="Transcriptional regulator"/>
    <property type="match status" value="1"/>
</dbReference>
<dbReference type="Gene3D" id="1.10.340.70">
    <property type="match status" value="1"/>
</dbReference>
<dbReference type="Gene3D" id="3.40.630.30">
    <property type="match status" value="1"/>
</dbReference>
<dbReference type="InterPro" id="IPR016181">
    <property type="entry name" value="Acyl_CoA_acyltransferase"/>
</dbReference>
<dbReference type="InterPro" id="IPR000182">
    <property type="entry name" value="GNAT_dom"/>
</dbReference>
<dbReference type="InterPro" id="IPR052742">
    <property type="entry name" value="Mito_N-acetyltransferase"/>
</dbReference>
<dbReference type="InterPro" id="IPR015416">
    <property type="entry name" value="Znf_H2C2_histone_UAS-bd"/>
</dbReference>
<dbReference type="PANTHER" id="PTHR43138">
    <property type="entry name" value="ACETYLTRANSFERASE, GNAT FAMILY"/>
    <property type="match status" value="1"/>
</dbReference>
<dbReference type="PANTHER" id="PTHR43138:SF2">
    <property type="entry name" value="PROTEIN SPT10"/>
    <property type="match status" value="1"/>
</dbReference>
<dbReference type="Pfam" id="PF00583">
    <property type="entry name" value="Acetyltransf_1"/>
    <property type="match status" value="1"/>
</dbReference>
<dbReference type="Pfam" id="PF09337">
    <property type="entry name" value="zf-H2C2"/>
    <property type="match status" value="1"/>
</dbReference>
<dbReference type="SUPFAM" id="SSF55729">
    <property type="entry name" value="Acyl-CoA N-acyltransferases (Nat)"/>
    <property type="match status" value="1"/>
</dbReference>
<dbReference type="PROSITE" id="PS51186">
    <property type="entry name" value="GNAT"/>
    <property type="match status" value="1"/>
</dbReference>
<comment type="function">
    <text>Required for normal transcription at a number of loci in yeast. Affects transcription at Ty1 elements, at PHO5, STE6 and ADH2.</text>
</comment>
<comment type="disruption phenotype">
    <text evidence="4">Decreases HTA1 RNA level.</text>
</comment>
<comment type="miscellaneous">
    <text evidence="3">Present with 1500 molecules/cell in log phase SD medium.</text>
</comment>
<feature type="chain" id="PRO_0000072160" description="Protein SPT10">
    <location>
        <begin position="1"/>
        <end position="640"/>
    </location>
</feature>
<feature type="domain" description="N-acetyltransferase" evidence="1">
    <location>
        <begin position="121"/>
        <end position="259"/>
    </location>
</feature>
<feature type="region of interest" description="Disordered" evidence="2">
    <location>
        <begin position="1"/>
        <end position="30"/>
    </location>
</feature>
<feature type="region of interest" description="Disordered" evidence="2">
    <location>
        <begin position="534"/>
        <end position="565"/>
    </location>
</feature>
<feature type="compositionally biased region" description="Basic and acidic residues" evidence="2">
    <location>
        <begin position="549"/>
        <end position="565"/>
    </location>
</feature>
<feature type="mutagenesis site" description="Loss of complementation of the suppression phenotype." evidence="5">
    <original>C</original>
    <variation>S</variation>
    <location>
        <position position="388"/>
    </location>
</feature>
<protein>
    <recommendedName>
        <fullName>Protein SPT10</fullName>
    </recommendedName>
</protein>
<organism>
    <name type="scientific">Saccharomyces cerevisiae (strain ATCC 204508 / S288c)</name>
    <name type="common">Baker's yeast</name>
    <dbReference type="NCBI Taxonomy" id="559292"/>
    <lineage>
        <taxon>Eukaryota</taxon>
        <taxon>Fungi</taxon>
        <taxon>Dikarya</taxon>
        <taxon>Ascomycota</taxon>
        <taxon>Saccharomycotina</taxon>
        <taxon>Saccharomycetes</taxon>
        <taxon>Saccharomycetales</taxon>
        <taxon>Saccharomycetaceae</taxon>
        <taxon>Saccharomyces</taxon>
    </lineage>
</organism>